<gene>
    <name evidence="3" type="primary">FUT1</name>
</gene>
<comment type="function">
    <text evidence="2 3">Catalyzes the transfer of L-fucose, from a guanosine diphosphate-beta-L-fucose, to the terminal galactose residue of glycoconjugates through an alpha(1,2) linkage leading to H antigen synthesis that is an intermediate substrate in the synthesis of ABO blood group antigens. H antigen is essential for maturation of the glomerular layer of the main olfactory bulb, in cell migration and early cell-cell contacts during tumor associated angiogenesis (By similarity). Preferentially fucosylates soluble lactose and to a lesser extent fucosylates glycolipids gangliosides GA1 and GM1a (By similarity).</text>
</comment>
<comment type="catalytic activity">
    <reaction evidence="3">
        <text>a beta-D-galactosyl-(1-&gt;4)-N-acetyl-beta-D-glucosaminyl derivative + GDP-beta-L-fucose = an alpha-L-Fuc-(1-&gt;2)-beta-D-Gal-(1-&gt;4)-beta-D-GlcNAc derivative + GDP + H(+)</text>
        <dbReference type="Rhea" id="RHEA:50668"/>
        <dbReference type="ChEBI" id="CHEBI:15378"/>
        <dbReference type="ChEBI" id="CHEBI:57273"/>
        <dbReference type="ChEBI" id="CHEBI:58189"/>
        <dbReference type="ChEBI" id="CHEBI:133507"/>
        <dbReference type="ChEBI" id="CHEBI:133510"/>
        <dbReference type="EC" id="2.4.1.344"/>
    </reaction>
</comment>
<comment type="catalytic activity">
    <reaction evidence="2">
        <text>a ganglioside GA1 + GDP-beta-L-fucose = a ganglioside Fuc-GA1 + GDP + H(+)</text>
        <dbReference type="Rhea" id="RHEA:48320"/>
        <dbReference type="ChEBI" id="CHEBI:15378"/>
        <dbReference type="ChEBI" id="CHEBI:57273"/>
        <dbReference type="ChEBI" id="CHEBI:58189"/>
        <dbReference type="ChEBI" id="CHEBI:88069"/>
        <dbReference type="ChEBI" id="CHEBI:90262"/>
    </reaction>
    <physiologicalReaction direction="left-to-right" evidence="2">
        <dbReference type="Rhea" id="RHEA:48321"/>
    </physiologicalReaction>
</comment>
<comment type="catalytic activity">
    <reaction evidence="2">
        <text>a beta-D-Gal-(1-&gt;3)-beta-D-GlcNAc-(1-&gt;3)-beta-D-Gal-(1-&gt;4)-beta-D-Glc-(1&lt;-&gt;1')-Cer(d18:1(4E)) + GDP-beta-L-fucose = alpha-L-fucosyl-(1-&gt;2)- beta-D-galactosyl-(1-&gt;3)-N-acetyl-beta-D-glucosaminyl-(1-&gt;3)-beta-D-galactosyl-(1-&gt;4)-beta-D-glucosyl-(1&lt;-&gt;1')-N-acylsphing-4-enine + GDP + H(+)</text>
        <dbReference type="Rhea" id="RHEA:32175"/>
        <dbReference type="ChEBI" id="CHEBI:15378"/>
        <dbReference type="ChEBI" id="CHEBI:17292"/>
        <dbReference type="ChEBI" id="CHEBI:28743"/>
        <dbReference type="ChEBI" id="CHEBI:57273"/>
        <dbReference type="ChEBI" id="CHEBI:58189"/>
        <dbReference type="EC" id="2.4.1.69"/>
    </reaction>
    <physiologicalReaction direction="left-to-right" evidence="2">
        <dbReference type="Rhea" id="RHEA:32176"/>
    </physiologicalReaction>
</comment>
<comment type="catalytic activity">
    <reaction evidence="2">
        <text>a neolactoside nLc4Cer(d18:1(4E)) + GDP-beta-L-fucose = a neolactoside IV(2)-alpha-Fuc-nLc4Cer(d18:1(4E)) + GDP + H(+)</text>
        <dbReference type="Rhea" id="RHEA:48304"/>
        <dbReference type="ChEBI" id="CHEBI:15378"/>
        <dbReference type="ChEBI" id="CHEBI:17006"/>
        <dbReference type="ChEBI" id="CHEBI:28691"/>
        <dbReference type="ChEBI" id="CHEBI:57273"/>
        <dbReference type="ChEBI" id="CHEBI:58189"/>
    </reaction>
    <physiologicalReaction direction="left-to-right" evidence="2">
        <dbReference type="Rhea" id="RHEA:48305"/>
    </physiologicalReaction>
</comment>
<comment type="catalytic activity">
    <reaction evidence="1">
        <text>a ganglioside GM1 + GDP-beta-L-fucose = a ganglioside Fuc-GM1 + GDP + H(+)</text>
        <dbReference type="Rhea" id="RHEA:48292"/>
        <dbReference type="ChEBI" id="CHEBI:15378"/>
        <dbReference type="ChEBI" id="CHEBI:57273"/>
        <dbReference type="ChEBI" id="CHEBI:58189"/>
        <dbReference type="ChEBI" id="CHEBI:82639"/>
        <dbReference type="ChEBI" id="CHEBI:90189"/>
    </reaction>
    <physiologicalReaction direction="left-to-right" evidence="1">
        <dbReference type="Rhea" id="RHEA:48293"/>
    </physiologicalReaction>
</comment>
<comment type="catalytic activity">
    <reaction evidence="1">
        <text>beta-D-galactosyl-(1-&gt;3)-N-acetyl-D-galactosamine + GDP-beta-L-fucose = alpha-L-fucosyl-(1-&gt;2)-beta-D-galactosyl-(1-&gt;3)-N-acetyl-D-galactosamine + GDP + H(+)</text>
        <dbReference type="Rhea" id="RHEA:62964"/>
        <dbReference type="ChEBI" id="CHEBI:15378"/>
        <dbReference type="ChEBI" id="CHEBI:57273"/>
        <dbReference type="ChEBI" id="CHEBI:58189"/>
        <dbReference type="ChEBI" id="CHEBI:84728"/>
        <dbReference type="ChEBI" id="CHEBI:546807"/>
    </reaction>
    <physiologicalReaction direction="left-to-right" evidence="1">
        <dbReference type="Rhea" id="RHEA:62965"/>
    </physiologicalReaction>
</comment>
<comment type="pathway">
    <text evidence="3">Protein modification; protein glycosylation.</text>
</comment>
<comment type="subcellular location">
    <subcellularLocation>
        <location evidence="2">Golgi apparatus</location>
        <location evidence="2">Golgi stack membrane</location>
        <topology evidence="2">Single-pass type II membrane protein</topology>
    </subcellularLocation>
    <text evidence="2">Membrane-bound form in trans cisternae of Golgi.</text>
</comment>
<comment type="similarity">
    <text evidence="5">Belongs to the glycosyltransferase 11 family.</text>
</comment>
<feature type="chain" id="PRO_0000149089" description="Galactoside alpha-(1,2)-fucosyltransferase 1">
    <location>
        <begin position="1"/>
        <end position="366"/>
    </location>
</feature>
<feature type="topological domain" description="Cytoplasmic" evidence="4">
    <location>
        <begin position="1"/>
        <end position="8"/>
    </location>
</feature>
<feature type="transmembrane region" description="Helical; Signal-anchor for type II membrane protein" evidence="4">
    <location>
        <begin position="9"/>
        <end position="25"/>
    </location>
</feature>
<feature type="topological domain" description="Lumenal" evidence="4">
    <location>
        <begin position="26"/>
        <end position="366"/>
    </location>
</feature>
<feature type="glycosylation site" description="N-linked (GlcNAc...) asparagine" evidence="4">
    <location>
        <position position="66"/>
    </location>
</feature>
<feature type="glycosylation site" description="N-linked (GlcNAc...) asparagine" evidence="4">
    <location>
        <position position="302"/>
    </location>
</feature>
<feature type="glycosylation site" description="N-linked (GlcNAc...) asparagine" evidence="4">
    <location>
        <position position="328"/>
    </location>
</feature>
<evidence type="ECO:0000250" key="1">
    <source>
        <dbReference type="UniProtKB" id="F6Q1T7"/>
    </source>
</evidence>
<evidence type="ECO:0000250" key="2">
    <source>
        <dbReference type="UniProtKB" id="O09160"/>
    </source>
</evidence>
<evidence type="ECO:0000250" key="3">
    <source>
        <dbReference type="UniProtKB" id="P19526"/>
    </source>
</evidence>
<evidence type="ECO:0000255" key="4"/>
<evidence type="ECO:0000305" key="5"/>
<keyword id="KW-0325">Glycoprotein</keyword>
<keyword id="KW-0328">Glycosyltransferase</keyword>
<keyword id="KW-0333">Golgi apparatus</keyword>
<keyword id="KW-0443">Lipid metabolism</keyword>
<keyword id="KW-0472">Membrane</keyword>
<keyword id="KW-1185">Reference proteome</keyword>
<keyword id="KW-0735">Signal-anchor</keyword>
<keyword id="KW-0808">Transferase</keyword>
<keyword id="KW-0812">Transmembrane</keyword>
<keyword id="KW-1133">Transmembrane helix</keyword>
<proteinExistence type="inferred from homology"/>
<accession>Q866E7</accession>
<reference key="1">
    <citation type="submission" date="2003-01" db="EMBL/GenBank/DDBJ databases">
        <title>Molecular evolution of the H (FUT1) gene in New World monkeys (Primates, Platyrrhini): evidence of divergent evolution and purifying selection.</title>
        <authorList>
            <person name="Borges B.N."/>
            <person name="Harada M.L."/>
        </authorList>
    </citation>
    <scope>NUCLEOTIDE SEQUENCE [GENOMIC DNA]</scope>
</reference>
<organism>
    <name type="scientific">Aotus nancymaae</name>
    <name type="common">Ma's night monkey</name>
    <dbReference type="NCBI Taxonomy" id="37293"/>
    <lineage>
        <taxon>Eukaryota</taxon>
        <taxon>Metazoa</taxon>
        <taxon>Chordata</taxon>
        <taxon>Craniata</taxon>
        <taxon>Vertebrata</taxon>
        <taxon>Euteleostomi</taxon>
        <taxon>Mammalia</taxon>
        <taxon>Eutheria</taxon>
        <taxon>Euarchontoglires</taxon>
        <taxon>Primates</taxon>
        <taxon>Haplorrhini</taxon>
        <taxon>Platyrrhini</taxon>
        <taxon>Aotidae</taxon>
        <taxon>Aotus</taxon>
    </lineage>
</organism>
<sequence>MWPLSHRHLCLAFLLVCVLSAISFFLHIHQDSIRHGLGLSVLCPDRRLVTPPVAIFCLPGTPMSPNTSSPCPQNSASLSGTWTIYPDGRFGNQMGQYATLLALAQLNGRRAFILPAMHAALAPVFRITLPVLAPEVDSRTPWRELRLHDWMSEEYADLGDPFLKLSGFPCSWTFFHHLREQIRSEFTLHDHLREEAQSVLRRLRLGRSGDRPRTFVGVHVRRGDYLQVMPQRWKGVVGNGAYLREAMDWFRARHEAPVFVVTSNGMDWCRENIDASKGDVMFAGDGQEASPWKDFALLTQCNHTIMTIGTFGFWAAYLAGGDTVYLANFTLPDSEFLKIFKPEAAFLPEWVGINADLSPLWTLAEP</sequence>
<name>FUT1_AOTNA</name>
<dbReference type="EC" id="2.4.1.69" evidence="2"/>
<dbReference type="EC" id="2.4.1.344" evidence="3"/>
<dbReference type="EMBL" id="AY219621">
    <property type="protein sequence ID" value="AAO43063.1"/>
    <property type="molecule type" value="Genomic_DNA"/>
</dbReference>
<dbReference type="SMR" id="Q866E7"/>
<dbReference type="CAZy" id="GT11">
    <property type="family name" value="Glycosyltransferase Family 11"/>
</dbReference>
<dbReference type="GlyCosmos" id="Q866E7">
    <property type="glycosylation" value="3 sites, No reported glycans"/>
</dbReference>
<dbReference type="UniPathway" id="UPA00378"/>
<dbReference type="Proteomes" id="UP000233020">
    <property type="component" value="Whole Genome Shotgun Assembly"/>
</dbReference>
<dbReference type="GO" id="GO:0032580">
    <property type="term" value="C:Golgi cisterna membrane"/>
    <property type="evidence" value="ECO:0007669"/>
    <property type="project" value="UniProtKB-SubCell"/>
</dbReference>
<dbReference type="GO" id="GO:0031127">
    <property type="term" value="F:alpha-(1,2)-fucosyltransferase activity"/>
    <property type="evidence" value="ECO:0000250"/>
    <property type="project" value="UniProtKB"/>
</dbReference>
<dbReference type="GO" id="GO:0008107">
    <property type="term" value="F:galactoside 2-alpha-L-fucosyltransferase activity"/>
    <property type="evidence" value="ECO:0007669"/>
    <property type="project" value="UniProtKB-EC"/>
</dbReference>
<dbReference type="GO" id="GO:0005975">
    <property type="term" value="P:carbohydrate metabolic process"/>
    <property type="evidence" value="ECO:0007669"/>
    <property type="project" value="InterPro"/>
</dbReference>
<dbReference type="GO" id="GO:0036065">
    <property type="term" value="P:fucosylation"/>
    <property type="evidence" value="ECO:0000250"/>
    <property type="project" value="UniProtKB"/>
</dbReference>
<dbReference type="GO" id="GO:0006629">
    <property type="term" value="P:lipid metabolic process"/>
    <property type="evidence" value="ECO:0007669"/>
    <property type="project" value="UniProtKB-KW"/>
</dbReference>
<dbReference type="GO" id="GO:0021772">
    <property type="term" value="P:olfactory bulb development"/>
    <property type="evidence" value="ECO:0000250"/>
    <property type="project" value="UniProtKB"/>
</dbReference>
<dbReference type="GO" id="GO:0001954">
    <property type="term" value="P:positive regulation of cell-matrix adhesion"/>
    <property type="evidence" value="ECO:0000250"/>
    <property type="project" value="UniProtKB"/>
</dbReference>
<dbReference type="GO" id="GO:0010595">
    <property type="term" value="P:positive regulation of endothelial cell migration"/>
    <property type="evidence" value="ECO:0000250"/>
    <property type="project" value="UniProtKB"/>
</dbReference>
<dbReference type="GO" id="GO:1904906">
    <property type="term" value="P:positive regulation of endothelial cell-matrix adhesion via fibronectin"/>
    <property type="evidence" value="ECO:0000250"/>
    <property type="project" value="UniProtKB"/>
</dbReference>
<dbReference type="GO" id="GO:1903672">
    <property type="term" value="P:positive regulation of sprouting angiogenesis"/>
    <property type="evidence" value="ECO:0000250"/>
    <property type="project" value="UniProtKB"/>
</dbReference>
<dbReference type="GO" id="GO:0006486">
    <property type="term" value="P:protein glycosylation"/>
    <property type="evidence" value="ECO:0000250"/>
    <property type="project" value="UniProtKB"/>
</dbReference>
<dbReference type="GO" id="GO:0030155">
    <property type="term" value="P:regulation of cell adhesion"/>
    <property type="evidence" value="ECO:0000250"/>
    <property type="project" value="UniProtKB"/>
</dbReference>
<dbReference type="GO" id="GO:0001936">
    <property type="term" value="P:regulation of endothelial cell proliferation"/>
    <property type="evidence" value="ECO:0000250"/>
    <property type="project" value="UniProtKB"/>
</dbReference>
<dbReference type="CDD" id="cd11301">
    <property type="entry name" value="Fut1_Fut2_like"/>
    <property type="match status" value="1"/>
</dbReference>
<dbReference type="InterPro" id="IPR002516">
    <property type="entry name" value="Glyco_trans_11"/>
</dbReference>
<dbReference type="PANTHER" id="PTHR11927">
    <property type="entry name" value="GALACTOSIDE 2-L-FUCOSYLTRANSFERASE"/>
    <property type="match status" value="1"/>
</dbReference>
<dbReference type="PANTHER" id="PTHR11927:SF4">
    <property type="entry name" value="GALACTOSIDE ALPHA-(1,2)-FUCOSYLTRANSFERASE 1"/>
    <property type="match status" value="1"/>
</dbReference>
<dbReference type="Pfam" id="PF01531">
    <property type="entry name" value="Glyco_transf_11"/>
    <property type="match status" value="1"/>
</dbReference>
<protein>
    <recommendedName>
        <fullName evidence="3">Galactoside alpha-(1,2)-fucosyltransferase 1</fullName>
    </recommendedName>
    <alternativeName>
        <fullName>Alpha(1,2)FT 1</fullName>
    </alternativeName>
    <alternativeName>
        <fullName>Fucosyltransferase 1</fullName>
    </alternativeName>
    <alternativeName>
        <fullName>GDP-L-fucose:beta-D-galactoside 2-alpha-L-fucosyltransferase 1</fullName>
    </alternativeName>
    <alternativeName>
        <fullName evidence="2">Type 1 galactoside alpha-(1,2)-fucosyltransferase FUT1</fullName>
        <ecNumber evidence="2">2.4.1.69</ecNumber>
    </alternativeName>
    <alternativeName>
        <fullName evidence="3">Type 2 galactoside alpha-(1,2)-fucosyltransferase FUT1</fullName>
        <ecNumber evidence="3">2.4.1.344</ecNumber>
    </alternativeName>
</protein>